<dbReference type="EMBL" id="CP000680">
    <property type="protein sequence ID" value="ABP86666.1"/>
    <property type="molecule type" value="Genomic_DNA"/>
</dbReference>
<dbReference type="SMR" id="A4XZA0"/>
<dbReference type="STRING" id="399739.Pmen_3919"/>
<dbReference type="KEGG" id="pmy:Pmen_3919"/>
<dbReference type="PATRIC" id="fig|399739.8.peg.3972"/>
<dbReference type="eggNOG" id="COG0081">
    <property type="taxonomic scope" value="Bacteria"/>
</dbReference>
<dbReference type="HOGENOM" id="CLU_062853_0_0_6"/>
<dbReference type="OrthoDB" id="9803740at2"/>
<dbReference type="GO" id="GO:0022625">
    <property type="term" value="C:cytosolic large ribosomal subunit"/>
    <property type="evidence" value="ECO:0007669"/>
    <property type="project" value="TreeGrafter"/>
</dbReference>
<dbReference type="GO" id="GO:0019843">
    <property type="term" value="F:rRNA binding"/>
    <property type="evidence" value="ECO:0007669"/>
    <property type="project" value="UniProtKB-UniRule"/>
</dbReference>
<dbReference type="GO" id="GO:0003735">
    <property type="term" value="F:structural constituent of ribosome"/>
    <property type="evidence" value="ECO:0007669"/>
    <property type="project" value="InterPro"/>
</dbReference>
<dbReference type="GO" id="GO:0000049">
    <property type="term" value="F:tRNA binding"/>
    <property type="evidence" value="ECO:0007669"/>
    <property type="project" value="UniProtKB-KW"/>
</dbReference>
<dbReference type="GO" id="GO:0006417">
    <property type="term" value="P:regulation of translation"/>
    <property type="evidence" value="ECO:0007669"/>
    <property type="project" value="UniProtKB-KW"/>
</dbReference>
<dbReference type="GO" id="GO:0006412">
    <property type="term" value="P:translation"/>
    <property type="evidence" value="ECO:0007669"/>
    <property type="project" value="UniProtKB-UniRule"/>
</dbReference>
<dbReference type="CDD" id="cd00403">
    <property type="entry name" value="Ribosomal_L1"/>
    <property type="match status" value="1"/>
</dbReference>
<dbReference type="FunFam" id="3.40.50.790:FF:000001">
    <property type="entry name" value="50S ribosomal protein L1"/>
    <property type="match status" value="1"/>
</dbReference>
<dbReference type="Gene3D" id="3.30.190.20">
    <property type="match status" value="1"/>
</dbReference>
<dbReference type="Gene3D" id="3.40.50.790">
    <property type="match status" value="1"/>
</dbReference>
<dbReference type="HAMAP" id="MF_01318_B">
    <property type="entry name" value="Ribosomal_uL1_B"/>
    <property type="match status" value="1"/>
</dbReference>
<dbReference type="InterPro" id="IPR005878">
    <property type="entry name" value="Ribosom_uL1_bac-type"/>
</dbReference>
<dbReference type="InterPro" id="IPR002143">
    <property type="entry name" value="Ribosomal_uL1"/>
</dbReference>
<dbReference type="InterPro" id="IPR023674">
    <property type="entry name" value="Ribosomal_uL1-like"/>
</dbReference>
<dbReference type="InterPro" id="IPR028364">
    <property type="entry name" value="Ribosomal_uL1/biogenesis"/>
</dbReference>
<dbReference type="InterPro" id="IPR016095">
    <property type="entry name" value="Ribosomal_uL1_3-a/b-sand"/>
</dbReference>
<dbReference type="InterPro" id="IPR023673">
    <property type="entry name" value="Ribosomal_uL1_CS"/>
</dbReference>
<dbReference type="NCBIfam" id="TIGR01169">
    <property type="entry name" value="rplA_bact"/>
    <property type="match status" value="1"/>
</dbReference>
<dbReference type="PANTHER" id="PTHR36427">
    <property type="entry name" value="54S RIBOSOMAL PROTEIN L1, MITOCHONDRIAL"/>
    <property type="match status" value="1"/>
</dbReference>
<dbReference type="PANTHER" id="PTHR36427:SF3">
    <property type="entry name" value="LARGE RIBOSOMAL SUBUNIT PROTEIN UL1M"/>
    <property type="match status" value="1"/>
</dbReference>
<dbReference type="Pfam" id="PF00687">
    <property type="entry name" value="Ribosomal_L1"/>
    <property type="match status" value="1"/>
</dbReference>
<dbReference type="PIRSF" id="PIRSF002155">
    <property type="entry name" value="Ribosomal_L1"/>
    <property type="match status" value="1"/>
</dbReference>
<dbReference type="SUPFAM" id="SSF56808">
    <property type="entry name" value="Ribosomal protein L1"/>
    <property type="match status" value="1"/>
</dbReference>
<dbReference type="PROSITE" id="PS01199">
    <property type="entry name" value="RIBOSOMAL_L1"/>
    <property type="match status" value="1"/>
</dbReference>
<evidence type="ECO:0000255" key="1">
    <source>
        <dbReference type="HAMAP-Rule" id="MF_01318"/>
    </source>
</evidence>
<evidence type="ECO:0000305" key="2"/>
<feature type="chain" id="PRO_1000051914" description="Large ribosomal subunit protein uL1">
    <location>
        <begin position="1"/>
        <end position="231"/>
    </location>
</feature>
<organism>
    <name type="scientific">Ectopseudomonas mendocina (strain ymp)</name>
    <name type="common">Pseudomonas mendocina</name>
    <dbReference type="NCBI Taxonomy" id="399739"/>
    <lineage>
        <taxon>Bacteria</taxon>
        <taxon>Pseudomonadati</taxon>
        <taxon>Pseudomonadota</taxon>
        <taxon>Gammaproteobacteria</taxon>
        <taxon>Pseudomonadales</taxon>
        <taxon>Pseudomonadaceae</taxon>
        <taxon>Ectopseudomonas</taxon>
    </lineage>
</organism>
<comment type="function">
    <text evidence="1">Binds directly to 23S rRNA. The L1 stalk is quite mobile in the ribosome, and is involved in E site tRNA release.</text>
</comment>
<comment type="function">
    <text evidence="1">Protein L1 is also a translational repressor protein, it controls the translation of the L11 operon by binding to its mRNA.</text>
</comment>
<comment type="subunit">
    <text evidence="1">Part of the 50S ribosomal subunit.</text>
</comment>
<comment type="similarity">
    <text evidence="1">Belongs to the universal ribosomal protein uL1 family.</text>
</comment>
<sequence length="231" mass="23972">MAKLTKRQKAIAAKVEAGKAYTFEEAASLLAELSAVKFTESFDVAVNLGVDPRKSDQVVRGATVLPNGTGKTVRVAVFTQGPGAEAALAAGADKVGMDDLAAEMKAGDLNYDVVIASPDAMRVVGQLGQVLGPRGLMPNPKVGTVTPDVATAVKNAKAGQVRFRTDKNGIIHTSVGKVGFEAAALKQNVEALLADLKRLKPSTSKGIYVKRVTLSTTMGPGLIIDQASLDA</sequence>
<accession>A4XZA0</accession>
<keyword id="KW-0678">Repressor</keyword>
<keyword id="KW-0687">Ribonucleoprotein</keyword>
<keyword id="KW-0689">Ribosomal protein</keyword>
<keyword id="KW-0694">RNA-binding</keyword>
<keyword id="KW-0699">rRNA-binding</keyword>
<keyword id="KW-0810">Translation regulation</keyword>
<keyword id="KW-0820">tRNA-binding</keyword>
<name>RL1_ECTM1</name>
<protein>
    <recommendedName>
        <fullName evidence="1">Large ribosomal subunit protein uL1</fullName>
    </recommendedName>
    <alternativeName>
        <fullName evidence="2">50S ribosomal protein L1</fullName>
    </alternativeName>
</protein>
<reference key="1">
    <citation type="submission" date="2007-04" db="EMBL/GenBank/DDBJ databases">
        <title>Complete sequence of Pseudomonas mendocina ymp.</title>
        <authorList>
            <consortium name="US DOE Joint Genome Institute"/>
            <person name="Copeland A."/>
            <person name="Lucas S."/>
            <person name="Lapidus A."/>
            <person name="Barry K."/>
            <person name="Glavina del Rio T."/>
            <person name="Dalin E."/>
            <person name="Tice H."/>
            <person name="Pitluck S."/>
            <person name="Kiss H."/>
            <person name="Brettin T."/>
            <person name="Detter J.C."/>
            <person name="Bruce D."/>
            <person name="Han C."/>
            <person name="Schmutz J."/>
            <person name="Larimer F."/>
            <person name="Land M."/>
            <person name="Hauser L."/>
            <person name="Kyrpides N."/>
            <person name="Mikhailova N."/>
            <person name="Hersman L."/>
            <person name="Dubois J."/>
            <person name="Maurice P."/>
            <person name="Richardson P."/>
        </authorList>
    </citation>
    <scope>NUCLEOTIDE SEQUENCE [LARGE SCALE GENOMIC DNA]</scope>
    <source>
        <strain>ymp</strain>
    </source>
</reference>
<gene>
    <name evidence="1" type="primary">rplA</name>
    <name type="ordered locus">Pmen_3919</name>
</gene>
<proteinExistence type="inferred from homology"/>